<feature type="chain" id="PRO_0000186170" description="Troponin T, slow skeletal muscle">
    <location>
        <begin position="1"/>
        <end position="262"/>
    </location>
</feature>
<feature type="region of interest" description="Disordered" evidence="3">
    <location>
        <begin position="1"/>
        <end position="59"/>
    </location>
</feature>
<feature type="region of interest" description="Disordered" evidence="3">
    <location>
        <begin position="107"/>
        <end position="153"/>
    </location>
</feature>
<feature type="region of interest" description="Disordered" evidence="3">
    <location>
        <begin position="165"/>
        <end position="197"/>
    </location>
</feature>
<feature type="compositionally biased region" description="Acidic residues" evidence="3">
    <location>
        <begin position="1"/>
        <end position="31"/>
    </location>
</feature>
<feature type="compositionally biased region" description="Basic and acidic residues" evidence="3">
    <location>
        <begin position="32"/>
        <end position="41"/>
    </location>
</feature>
<feature type="compositionally biased region" description="Pro residues" evidence="3">
    <location>
        <begin position="43"/>
        <end position="55"/>
    </location>
</feature>
<feature type="compositionally biased region" description="Basic and acidic residues" evidence="3">
    <location>
        <begin position="107"/>
        <end position="149"/>
    </location>
</feature>
<feature type="compositionally biased region" description="Basic and acidic residues" evidence="3">
    <location>
        <begin position="177"/>
        <end position="197"/>
    </location>
</feature>
<feature type="modified residue" description="Phosphoserine; by CK2" evidence="1">
    <location>
        <position position="2"/>
    </location>
</feature>
<feature type="splice variant" id="VSP_013788" description="In isoform 2." evidence="4">
    <location>
        <begin position="25"/>
        <end position="35"/>
    </location>
</feature>
<sequence>MSDAEEQEYEEEQPEEEEAAEEEEAPEEPEPVAEREEERPKPSRPVVPPLIPPKIPEGERVDFDDIHRKRMEKDLLELQTLIDVHFEQRKKEEEELVALKERIERRRAERAEQQRFRTEKERERQAKLAEEKMRKEEEEAKKRAEDDAKKKKVLSNMGAHFGGYLVKAEQKRGKRQTGREMKQRILSERKKPLNIDHMGEDQLREKAQELSDWIHQLESEKFDLMAKLKQQKYEINVLYNRISHAQKFRKGAGKGRVGGRWK</sequence>
<dbReference type="EMBL" id="AB118908">
    <property type="protein sequence ID" value="BAC82459.1"/>
    <property type="molecule type" value="mRNA"/>
</dbReference>
<dbReference type="EMBL" id="AB118909">
    <property type="protein sequence ID" value="BAC82460.1"/>
    <property type="molecule type" value="mRNA"/>
</dbReference>
<dbReference type="RefSeq" id="NP_998913.1">
    <molecule id="Q75ZZ6-1"/>
    <property type="nucleotide sequence ID" value="NM_213748.2"/>
</dbReference>
<dbReference type="RefSeq" id="XP_005656022.1">
    <molecule id="Q75ZZ6-1"/>
    <property type="nucleotide sequence ID" value="XM_005655965.3"/>
</dbReference>
<dbReference type="RefSeq" id="XP_005656023.1">
    <molecule id="Q75ZZ6-2"/>
    <property type="nucleotide sequence ID" value="XM_005655966.3"/>
</dbReference>
<dbReference type="RefSeq" id="XP_020949118.1">
    <molecule id="Q75ZZ6-1"/>
    <property type="nucleotide sequence ID" value="XM_021093459.1"/>
</dbReference>
<dbReference type="RefSeq" id="XP_020949120.1">
    <molecule id="Q75ZZ6-1"/>
    <property type="nucleotide sequence ID" value="XM_021093461.1"/>
</dbReference>
<dbReference type="RefSeq" id="XP_020949121.1">
    <molecule id="Q75ZZ6-2"/>
    <property type="nucleotide sequence ID" value="XM_021093462.1"/>
</dbReference>
<dbReference type="RefSeq" id="XP_020949122.1">
    <molecule id="Q75ZZ6-2"/>
    <property type="nucleotide sequence ID" value="XM_021093463.1"/>
</dbReference>
<dbReference type="SMR" id="Q75ZZ6"/>
<dbReference type="FunCoup" id="Q75ZZ6">
    <property type="interactions" value="170"/>
</dbReference>
<dbReference type="STRING" id="9823.ENSSSCP00000069636"/>
<dbReference type="PaxDb" id="9823-ENSSSCP00000026745"/>
<dbReference type="PeptideAtlas" id="Q75ZZ6"/>
<dbReference type="Ensembl" id="ENSSSCT00000044398.3">
    <molecule id="Q75ZZ6-2"/>
    <property type="protein sequence ID" value="ENSSSCP00000035280.1"/>
    <property type="gene ID" value="ENSSSCG00000025353.4"/>
</dbReference>
<dbReference type="Ensembl" id="ENSSSCT00025083627.1">
    <molecule id="Q75ZZ6-1"/>
    <property type="protein sequence ID" value="ENSSSCP00025036385.1"/>
    <property type="gene ID" value="ENSSSCG00025060477.1"/>
</dbReference>
<dbReference type="Ensembl" id="ENSSSCT00030072701.1">
    <molecule id="Q75ZZ6-2"/>
    <property type="protein sequence ID" value="ENSSSCP00030033179.1"/>
    <property type="gene ID" value="ENSSSCG00030052097.1"/>
</dbReference>
<dbReference type="Ensembl" id="ENSSSCT00035050051.1">
    <molecule id="Q75ZZ6-2"/>
    <property type="protein sequence ID" value="ENSSSCP00035020037.1"/>
    <property type="gene ID" value="ENSSSCG00035037707.1"/>
</dbReference>
<dbReference type="Ensembl" id="ENSSSCT00040027807.1">
    <property type="protein sequence ID" value="ENSSSCP00040011724.1"/>
    <property type="gene ID" value="ENSSSCG00040020546.1"/>
</dbReference>
<dbReference type="Ensembl" id="ENSSSCT00040027904.1">
    <molecule id="Q75ZZ6-2"/>
    <property type="protein sequence ID" value="ENSSSCP00040011781.1"/>
    <property type="gene ID" value="ENSSSCG00040020546.1"/>
</dbReference>
<dbReference type="Ensembl" id="ENSSSCT00045018072.1">
    <molecule id="Q75ZZ6-1"/>
    <property type="protein sequence ID" value="ENSSSCP00045012446.1"/>
    <property type="gene ID" value="ENSSSCG00045010614.1"/>
</dbReference>
<dbReference type="Ensembl" id="ENSSSCT00045018117.1">
    <molecule id="Q75ZZ6-1"/>
    <property type="protein sequence ID" value="ENSSSCP00045012478.1"/>
    <property type="gene ID" value="ENSSSCG00045010614.1"/>
</dbReference>
<dbReference type="Ensembl" id="ENSSSCT00050084414.1">
    <molecule id="Q75ZZ6-1"/>
    <property type="protein sequence ID" value="ENSSSCP00050036241.1"/>
    <property type="gene ID" value="ENSSSCG00050061966.1"/>
</dbReference>
<dbReference type="Ensembl" id="ENSSSCT00050084454.1">
    <molecule id="Q75ZZ6-2"/>
    <property type="protein sequence ID" value="ENSSSCP00050036260.1"/>
    <property type="gene ID" value="ENSSSCG00050061966.1"/>
</dbReference>
<dbReference type="Ensembl" id="ENSSSCT00055027328.1">
    <molecule id="Q75ZZ6-2"/>
    <property type="protein sequence ID" value="ENSSSCP00055021740.1"/>
    <property type="gene ID" value="ENSSSCG00055013544.1"/>
</dbReference>
<dbReference type="Ensembl" id="ENSSSCT00060053453.1">
    <molecule id="Q75ZZ6-2"/>
    <property type="protein sequence ID" value="ENSSSCP00060022776.1"/>
    <property type="gene ID" value="ENSSSCG00060039415.1"/>
</dbReference>
<dbReference type="Ensembl" id="ENSSSCT00065027045.1">
    <molecule id="Q75ZZ6-2"/>
    <property type="protein sequence ID" value="ENSSSCP00065011108.1"/>
    <property type="gene ID" value="ENSSSCG00065020272.1"/>
</dbReference>
<dbReference type="Ensembl" id="ENSSSCT00070045443.1">
    <molecule id="Q75ZZ6-2"/>
    <property type="protein sequence ID" value="ENSSSCP00070038307.1"/>
    <property type="gene ID" value="ENSSSCG00070022767.1"/>
</dbReference>
<dbReference type="Ensembl" id="ENSSSCT00070046027.1">
    <molecule id="Q75ZZ6-1"/>
    <property type="protein sequence ID" value="ENSSSCP00070038811.1"/>
    <property type="gene ID" value="ENSSSCG00070022767.1"/>
</dbReference>
<dbReference type="GeneID" id="396579"/>
<dbReference type="KEGG" id="ssc:396579"/>
<dbReference type="CTD" id="7138"/>
<dbReference type="eggNOG" id="KOG3634">
    <property type="taxonomic scope" value="Eukaryota"/>
</dbReference>
<dbReference type="GeneTree" id="ENSGT00940000160609"/>
<dbReference type="HOGENOM" id="CLU_076377_0_0_1"/>
<dbReference type="InParanoid" id="Q75ZZ6"/>
<dbReference type="OMA" id="EWIYELE"/>
<dbReference type="OrthoDB" id="330499at2759"/>
<dbReference type="TreeFam" id="TF313321"/>
<dbReference type="Reactome" id="R-SSC-390522">
    <property type="pathway name" value="Striated Muscle Contraction"/>
</dbReference>
<dbReference type="Proteomes" id="UP000008227">
    <property type="component" value="Chromosome 6"/>
</dbReference>
<dbReference type="Proteomes" id="UP000314985">
    <property type="component" value="Chromosome 6"/>
</dbReference>
<dbReference type="Proteomes" id="UP000694570">
    <property type="component" value="Unplaced"/>
</dbReference>
<dbReference type="Proteomes" id="UP000694571">
    <property type="component" value="Unplaced"/>
</dbReference>
<dbReference type="Proteomes" id="UP000694720">
    <property type="component" value="Unplaced"/>
</dbReference>
<dbReference type="Proteomes" id="UP000694722">
    <property type="component" value="Unplaced"/>
</dbReference>
<dbReference type="Proteomes" id="UP000694723">
    <property type="component" value="Unplaced"/>
</dbReference>
<dbReference type="Proteomes" id="UP000694724">
    <property type="component" value="Unplaced"/>
</dbReference>
<dbReference type="Proteomes" id="UP000694725">
    <property type="component" value="Unplaced"/>
</dbReference>
<dbReference type="Proteomes" id="UP000694726">
    <property type="component" value="Unplaced"/>
</dbReference>
<dbReference type="Proteomes" id="UP000694727">
    <property type="component" value="Unplaced"/>
</dbReference>
<dbReference type="Proteomes" id="UP000694728">
    <property type="component" value="Unplaced"/>
</dbReference>
<dbReference type="Bgee" id="ENSSSCG00000025353">
    <property type="expression patterns" value="Expressed in longissimus lumborum muscle and 31 other cell types or tissues"/>
</dbReference>
<dbReference type="ExpressionAtlas" id="Q75ZZ6">
    <property type="expression patterns" value="baseline"/>
</dbReference>
<dbReference type="GO" id="GO:0005861">
    <property type="term" value="C:troponin complex"/>
    <property type="evidence" value="ECO:0000318"/>
    <property type="project" value="GO_Central"/>
</dbReference>
<dbReference type="GO" id="GO:0005523">
    <property type="term" value="F:tropomyosin binding"/>
    <property type="evidence" value="ECO:0000318"/>
    <property type="project" value="GO_Central"/>
</dbReference>
<dbReference type="GO" id="GO:0031014">
    <property type="term" value="F:troponin T binding"/>
    <property type="evidence" value="ECO:0000318"/>
    <property type="project" value="GO_Central"/>
</dbReference>
<dbReference type="GO" id="GO:0006937">
    <property type="term" value="P:regulation of muscle contraction"/>
    <property type="evidence" value="ECO:0007669"/>
    <property type="project" value="InterPro"/>
</dbReference>
<dbReference type="GO" id="GO:0031444">
    <property type="term" value="P:slow-twitch skeletal muscle fiber contraction"/>
    <property type="evidence" value="ECO:0000318"/>
    <property type="project" value="GO_Central"/>
</dbReference>
<dbReference type="FunFam" id="1.20.5.350:FF:000001">
    <property type="entry name" value="Troponin T, fast skeletal muscle"/>
    <property type="match status" value="1"/>
</dbReference>
<dbReference type="Gene3D" id="1.20.5.350">
    <property type="match status" value="1"/>
</dbReference>
<dbReference type="InterPro" id="IPR027707">
    <property type="entry name" value="TNNT"/>
</dbReference>
<dbReference type="InterPro" id="IPR001978">
    <property type="entry name" value="Troponin"/>
</dbReference>
<dbReference type="InterPro" id="IPR038077">
    <property type="entry name" value="Troponin_sf"/>
</dbReference>
<dbReference type="PANTHER" id="PTHR11521">
    <property type="entry name" value="TROPONIN T"/>
    <property type="match status" value="1"/>
</dbReference>
<dbReference type="PANTHER" id="PTHR11521:SF6">
    <property type="entry name" value="TROPONIN T, SLOW SKELETAL MUSCLE"/>
    <property type="match status" value="1"/>
</dbReference>
<dbReference type="Pfam" id="PF00992">
    <property type="entry name" value="Troponin"/>
    <property type="match status" value="1"/>
</dbReference>
<dbReference type="SUPFAM" id="SSF90250">
    <property type="entry name" value="Troponin coil-coiled subunits"/>
    <property type="match status" value="1"/>
</dbReference>
<comment type="function">
    <text>Troponin T is the tropomyosin-binding subunit of troponin, the thin filament regulatory complex which confers calcium-sensitivity to striated muscle actomyosin ATPase activity.</text>
</comment>
<comment type="subunit">
    <text evidence="2">Interacts with TPM3.</text>
</comment>
<comment type="alternative products">
    <event type="alternative splicing"/>
    <isoform>
        <id>Q75ZZ6-1</id>
        <name>1</name>
        <name>sTnT1</name>
        <sequence type="displayed"/>
    </isoform>
    <isoform>
        <id>Q75ZZ6-2</id>
        <name>2</name>
        <name>sTnT2</name>
        <sequence type="described" ref="VSP_013788"/>
    </isoform>
</comment>
<comment type="similarity">
    <text evidence="5">Belongs to the troponin T family.</text>
</comment>
<accession>Q75ZZ6</accession>
<accession>Q75ZZ5</accession>
<organism>
    <name type="scientific">Sus scrofa</name>
    <name type="common">Pig</name>
    <dbReference type="NCBI Taxonomy" id="9823"/>
    <lineage>
        <taxon>Eukaryota</taxon>
        <taxon>Metazoa</taxon>
        <taxon>Chordata</taxon>
        <taxon>Craniata</taxon>
        <taxon>Vertebrata</taxon>
        <taxon>Euteleostomi</taxon>
        <taxon>Mammalia</taxon>
        <taxon>Eutheria</taxon>
        <taxon>Laurasiatheria</taxon>
        <taxon>Artiodactyla</taxon>
        <taxon>Suina</taxon>
        <taxon>Suidae</taxon>
        <taxon>Sus</taxon>
    </lineage>
</organism>
<keyword id="KW-0025">Alternative splicing</keyword>
<keyword id="KW-0514">Muscle protein</keyword>
<keyword id="KW-0597">Phosphoprotein</keyword>
<keyword id="KW-1185">Reference proteome</keyword>
<gene>
    <name type="primary">TNNT1</name>
</gene>
<reference key="1">
    <citation type="journal article" date="2006" name="Biosci. Biotechnol. Biochem.">
        <title>Amino acid sequences of porcine fast and slow troponin T isoforms.</title>
        <authorList>
            <person name="Kitamura S."/>
            <person name="Muroya S."/>
            <person name="Nakajima I."/>
            <person name="Chikuni K."/>
            <person name="Nishimura T."/>
        </authorList>
    </citation>
    <scope>NUCLEOTIDE SEQUENCE [MRNA] (ISOFORMS 1 AND 2)</scope>
    <source>
        <strain>Large white X Landrace X Duroc</strain>
        <tissue>Skeletal muscle</tissue>
    </source>
</reference>
<evidence type="ECO:0000250" key="1"/>
<evidence type="ECO:0000250" key="2">
    <source>
        <dbReference type="UniProtKB" id="P13805"/>
    </source>
</evidence>
<evidence type="ECO:0000256" key="3">
    <source>
        <dbReference type="SAM" id="MobiDB-lite"/>
    </source>
</evidence>
<evidence type="ECO:0000303" key="4">
    <source>
    </source>
</evidence>
<evidence type="ECO:0000305" key="5"/>
<proteinExistence type="evidence at transcript level"/>
<protein>
    <recommendedName>
        <fullName>Troponin T, slow skeletal muscle</fullName>
        <shortName>TnTs</shortName>
    </recommendedName>
    <alternativeName>
        <fullName>Slow skeletal muscle troponin T</fullName>
        <shortName>sTnT</shortName>
    </alternativeName>
</protein>
<name>TNNT1_PIG</name>